<evidence type="ECO:0000255" key="1"/>
<evidence type="ECO:0000303" key="2">
    <source>
    </source>
</evidence>
<evidence type="ECO:0000305" key="3"/>
<protein>
    <recommendedName>
        <fullName>Putative transporter SVOPL</fullName>
    </recommendedName>
    <alternativeName>
        <fullName>SV2-related protein-like</fullName>
    </alternativeName>
    <alternativeName>
        <fullName>SVOP-like protein</fullName>
    </alternativeName>
</protein>
<name>SVOPL_HUMAN</name>
<proteinExistence type="evidence at protein level"/>
<dbReference type="EMBL" id="AC013429">
    <property type="status" value="NOT_ANNOTATED_CDS"/>
    <property type="molecule type" value="Genomic_DNA"/>
</dbReference>
<dbReference type="EMBL" id="AC020983">
    <property type="status" value="NOT_ANNOTATED_CDS"/>
    <property type="molecule type" value="Genomic_DNA"/>
</dbReference>
<dbReference type="EMBL" id="BC036796">
    <property type="protein sequence ID" value="AAH36796.1"/>
    <property type="molecule type" value="mRNA"/>
</dbReference>
<dbReference type="CCDS" id="CCDS47721.1">
    <molecule id="Q8N434-1"/>
</dbReference>
<dbReference type="CCDS" id="CCDS5848.1">
    <molecule id="Q8N434-2"/>
</dbReference>
<dbReference type="RefSeq" id="NP_001132928.1">
    <molecule id="Q8N434-1"/>
    <property type="nucleotide sequence ID" value="NM_001139456.2"/>
</dbReference>
<dbReference type="RefSeq" id="NP_777619.1">
    <molecule id="Q8N434-2"/>
    <property type="nucleotide sequence ID" value="NM_174959.3"/>
</dbReference>
<dbReference type="RefSeq" id="XP_005250200.1">
    <property type="nucleotide sequence ID" value="XM_005250143.3"/>
</dbReference>
<dbReference type="RefSeq" id="XP_011514099.1">
    <molecule id="Q8N434-2"/>
    <property type="nucleotide sequence ID" value="XM_011515797.3"/>
</dbReference>
<dbReference type="RefSeq" id="XP_016867236.1">
    <molecule id="Q8N434-2"/>
    <property type="nucleotide sequence ID" value="XM_017011747.2"/>
</dbReference>
<dbReference type="RefSeq" id="XP_016867237.1">
    <molecule id="Q8N434-2"/>
    <property type="nucleotide sequence ID" value="XM_017011748.2"/>
</dbReference>
<dbReference type="SMR" id="Q8N434"/>
<dbReference type="BioGRID" id="126453">
    <property type="interactions" value="10"/>
</dbReference>
<dbReference type="FunCoup" id="Q8N434">
    <property type="interactions" value="43"/>
</dbReference>
<dbReference type="IntAct" id="Q8N434">
    <property type="interactions" value="9"/>
</dbReference>
<dbReference type="STRING" id="9606.ENSP00000405482"/>
<dbReference type="TCDB" id="2.A.1.82.6">
    <property type="family name" value="the major facilitator superfamily (mfs)"/>
</dbReference>
<dbReference type="GlyGen" id="Q8N434">
    <property type="glycosylation" value="1 site, 1 N-linked glycan (1 site)"/>
</dbReference>
<dbReference type="iPTMnet" id="Q8N434"/>
<dbReference type="PhosphoSitePlus" id="Q8N434"/>
<dbReference type="BioMuta" id="SVOPL"/>
<dbReference type="DMDM" id="152112307"/>
<dbReference type="MassIVE" id="Q8N434"/>
<dbReference type="PaxDb" id="9606-ENSP00000405482"/>
<dbReference type="PeptideAtlas" id="Q8N434"/>
<dbReference type="Antibodypedia" id="18208">
    <property type="antibodies" value="92 antibodies from 17 providers"/>
</dbReference>
<dbReference type="DNASU" id="136306"/>
<dbReference type="Ensembl" id="ENST00000288513.9">
    <molecule id="Q8N434-2"/>
    <property type="protein sequence ID" value="ENSP00000288513.5"/>
    <property type="gene ID" value="ENSG00000157703.16"/>
</dbReference>
<dbReference type="Ensembl" id="ENST00000419765.4">
    <molecule id="Q8N434-1"/>
    <property type="protein sequence ID" value="ENSP00000405482.2"/>
    <property type="gene ID" value="ENSG00000157703.16"/>
</dbReference>
<dbReference type="Ensembl" id="ENST00000436657.5">
    <molecule id="Q8N434-2"/>
    <property type="protein sequence ID" value="ENSP00000417018.1"/>
    <property type="gene ID" value="ENSG00000157703.16"/>
</dbReference>
<dbReference type="Ensembl" id="ENST00000674285.1">
    <molecule id="Q8N434-1"/>
    <property type="protein sequence ID" value="ENSP00000501457.1"/>
    <property type="gene ID" value="ENSG00000157703.16"/>
</dbReference>
<dbReference type="GeneID" id="136306"/>
<dbReference type="KEGG" id="hsa:136306"/>
<dbReference type="MANE-Select" id="ENST00000674285.1">
    <property type="protein sequence ID" value="ENSP00000501457.1"/>
    <property type="RefSeq nucleotide sequence ID" value="NM_001139456.2"/>
    <property type="RefSeq protein sequence ID" value="NP_001132928.1"/>
</dbReference>
<dbReference type="UCSC" id="uc003vue.4">
    <molecule id="Q8N434-1"/>
    <property type="organism name" value="human"/>
</dbReference>
<dbReference type="AGR" id="HGNC:27034"/>
<dbReference type="CTD" id="136306"/>
<dbReference type="DisGeNET" id="136306"/>
<dbReference type="GeneCards" id="SVOPL"/>
<dbReference type="HGNC" id="HGNC:27034">
    <property type="gene designation" value="SVOPL"/>
</dbReference>
<dbReference type="HPA" id="ENSG00000157703">
    <property type="expression patterns" value="Tissue enhanced (choroid)"/>
</dbReference>
<dbReference type="MIM" id="611700">
    <property type="type" value="gene"/>
</dbReference>
<dbReference type="neXtProt" id="NX_Q8N434"/>
<dbReference type="OpenTargets" id="ENSG00000157703"/>
<dbReference type="PharmGKB" id="PA162405089"/>
<dbReference type="VEuPathDB" id="HostDB:ENSG00000157703"/>
<dbReference type="eggNOG" id="KOG0253">
    <property type="taxonomic scope" value="Eukaryota"/>
</dbReference>
<dbReference type="GeneTree" id="ENSGT00940000158632"/>
<dbReference type="HOGENOM" id="CLU_001265_46_0_1"/>
<dbReference type="InParanoid" id="Q8N434"/>
<dbReference type="OMA" id="PTWIGVC"/>
<dbReference type="OrthoDB" id="4139357at2759"/>
<dbReference type="PAN-GO" id="Q8N434">
    <property type="GO annotations" value="0 GO annotations based on evolutionary models"/>
</dbReference>
<dbReference type="PhylomeDB" id="Q8N434"/>
<dbReference type="TreeFam" id="TF313465"/>
<dbReference type="PathwayCommons" id="Q8N434"/>
<dbReference type="SignaLink" id="Q8N434"/>
<dbReference type="BioGRID-ORCS" id="136306">
    <property type="hits" value="11 hits in 1150 CRISPR screens"/>
</dbReference>
<dbReference type="ChiTaRS" id="SVOPL">
    <property type="organism name" value="human"/>
</dbReference>
<dbReference type="GenomeRNAi" id="136306"/>
<dbReference type="Pharos" id="Q8N434">
    <property type="development level" value="Tdark"/>
</dbReference>
<dbReference type="PRO" id="PR:Q8N434"/>
<dbReference type="Proteomes" id="UP000005640">
    <property type="component" value="Chromosome 7"/>
</dbReference>
<dbReference type="RNAct" id="Q8N434">
    <property type="molecule type" value="protein"/>
</dbReference>
<dbReference type="Bgee" id="ENSG00000157703">
    <property type="expression patterns" value="Expressed in secondary oocyte and 94 other cell types or tissues"/>
</dbReference>
<dbReference type="ExpressionAtlas" id="Q8N434">
    <property type="expression patterns" value="baseline and differential"/>
</dbReference>
<dbReference type="GO" id="GO:0016020">
    <property type="term" value="C:membrane"/>
    <property type="evidence" value="ECO:0007669"/>
    <property type="project" value="UniProtKB-SubCell"/>
</dbReference>
<dbReference type="GO" id="GO:0022857">
    <property type="term" value="F:transmembrane transporter activity"/>
    <property type="evidence" value="ECO:0007669"/>
    <property type="project" value="InterPro"/>
</dbReference>
<dbReference type="CDD" id="cd17442">
    <property type="entry name" value="MFS_SVOPL"/>
    <property type="match status" value="1"/>
</dbReference>
<dbReference type="Gene3D" id="1.20.1250.20">
    <property type="entry name" value="MFS general substrate transporter like domains"/>
    <property type="match status" value="1"/>
</dbReference>
<dbReference type="InterPro" id="IPR011701">
    <property type="entry name" value="MFS"/>
</dbReference>
<dbReference type="InterPro" id="IPR020846">
    <property type="entry name" value="MFS_dom"/>
</dbReference>
<dbReference type="InterPro" id="IPR005828">
    <property type="entry name" value="MFS_sugar_transport-like"/>
</dbReference>
<dbReference type="InterPro" id="IPR036259">
    <property type="entry name" value="MFS_trans_sf"/>
</dbReference>
<dbReference type="PANTHER" id="PTHR23511:SF45">
    <property type="entry name" value="SVOP LIKE"/>
    <property type="match status" value="1"/>
</dbReference>
<dbReference type="PANTHER" id="PTHR23511">
    <property type="entry name" value="SYNAPTIC VESICLE GLYCOPROTEIN 2"/>
    <property type="match status" value="1"/>
</dbReference>
<dbReference type="Pfam" id="PF07690">
    <property type="entry name" value="MFS_1"/>
    <property type="match status" value="1"/>
</dbReference>
<dbReference type="Pfam" id="PF00083">
    <property type="entry name" value="Sugar_tr"/>
    <property type="match status" value="1"/>
</dbReference>
<dbReference type="SUPFAM" id="SSF103473">
    <property type="entry name" value="MFS general substrate transporter"/>
    <property type="match status" value="1"/>
</dbReference>
<dbReference type="PROSITE" id="PS50850">
    <property type="entry name" value="MFS"/>
    <property type="match status" value="1"/>
</dbReference>
<gene>
    <name type="primary">SVOPL</name>
</gene>
<comment type="interaction">
    <interactant intactId="EBI-23750686">
        <id>Q8N434-2</id>
    </interactant>
    <interactant intactId="EBI-12038591">
        <id>Q69YG0</id>
        <label>TMEM42</label>
    </interactant>
    <organismsDiffer>false</organismsDiffer>
    <experiments>3</experiments>
</comment>
<comment type="subcellular location">
    <subcellularLocation>
        <location evidence="3">Membrane</location>
        <topology evidence="3">Multi-pass membrane protein</topology>
    </subcellularLocation>
</comment>
<comment type="alternative products">
    <event type="alternative splicing"/>
    <isoform>
        <id>Q8N434-1</id>
        <name>1</name>
        <sequence type="displayed"/>
    </isoform>
    <isoform>
        <id>Q8N434-2</id>
        <name>2</name>
        <sequence type="described" ref="VSP_026651 VSP_026652"/>
    </isoform>
</comment>
<comment type="similarity">
    <text evidence="3">Belongs to the major facilitator superfamily.</text>
</comment>
<keyword id="KW-0025">Alternative splicing</keyword>
<keyword id="KW-0472">Membrane</keyword>
<keyword id="KW-1185">Reference proteome</keyword>
<keyword id="KW-0812">Transmembrane</keyword>
<keyword id="KW-1133">Transmembrane helix</keyword>
<keyword id="KW-0813">Transport</keyword>
<organism>
    <name type="scientific">Homo sapiens</name>
    <name type="common">Human</name>
    <dbReference type="NCBI Taxonomy" id="9606"/>
    <lineage>
        <taxon>Eukaryota</taxon>
        <taxon>Metazoa</taxon>
        <taxon>Chordata</taxon>
        <taxon>Craniata</taxon>
        <taxon>Vertebrata</taxon>
        <taxon>Euteleostomi</taxon>
        <taxon>Mammalia</taxon>
        <taxon>Eutheria</taxon>
        <taxon>Euarchontoglires</taxon>
        <taxon>Primates</taxon>
        <taxon>Haplorrhini</taxon>
        <taxon>Catarrhini</taxon>
        <taxon>Hominidae</taxon>
        <taxon>Homo</taxon>
    </lineage>
</organism>
<feature type="chain" id="PRO_0000294461" description="Putative transporter SVOPL">
    <location>
        <begin position="1"/>
        <end position="492"/>
    </location>
</feature>
<feature type="transmembrane region" description="Helical" evidence="1">
    <location>
        <begin position="48"/>
        <end position="68"/>
    </location>
</feature>
<feature type="transmembrane region" description="Helical" evidence="1">
    <location>
        <begin position="86"/>
        <end position="106"/>
    </location>
</feature>
<feature type="transmembrane region" description="Helical" evidence="1">
    <location>
        <begin position="121"/>
        <end position="141"/>
    </location>
</feature>
<feature type="transmembrane region" description="Helical" evidence="1">
    <location>
        <begin position="179"/>
        <end position="199"/>
    </location>
</feature>
<feature type="transmembrane region" description="Helical" evidence="1">
    <location>
        <begin position="203"/>
        <end position="223"/>
    </location>
</feature>
<feature type="transmembrane region" description="Helical" evidence="1">
    <location>
        <begin position="281"/>
        <end position="301"/>
    </location>
</feature>
<feature type="transmembrane region" description="Helical" evidence="1">
    <location>
        <begin position="348"/>
        <end position="368"/>
    </location>
</feature>
<feature type="transmembrane region" description="Helical" evidence="1">
    <location>
        <begin position="383"/>
        <end position="403"/>
    </location>
</feature>
<feature type="transmembrane region" description="Helical" evidence="1">
    <location>
        <begin position="429"/>
        <end position="449"/>
    </location>
</feature>
<feature type="transmembrane region" description="Helical" evidence="1">
    <location>
        <begin position="458"/>
        <end position="478"/>
    </location>
</feature>
<feature type="splice variant" id="VSP_026651" description="In isoform 2." evidence="2">
    <location>
        <begin position="1"/>
        <end position="152"/>
    </location>
</feature>
<feature type="splice variant" id="VSP_026652" description="In isoform 2." evidence="2">
    <original>GHSQG</original>
    <variation>MAAGR</variation>
    <location>
        <begin position="153"/>
        <end position="157"/>
    </location>
</feature>
<feature type="sequence variant" id="VAR_033188" description="In dbSNP:rs2305816.">
    <original>F</original>
    <variation>C</variation>
    <location>
        <position position="385"/>
    </location>
</feature>
<accession>Q8N434</accession>
<sequence>MATKPTEPVTILSLRKLSLGTAEPQVKEPKTFTVEDAVETIGFGRFHIALFLIMGSTGVVEAMEIMLIAVVSPVIRCEWQLENWQVALVTTMVFFGYMVFSILFGLLADRYGRWKILLISFLWGAYFSLLTSFAPSYIWFVFLRTMVGCGVSGHSQGLIIKTEFLPTKYRGYMLPLSQVFWLAGSLLIIGLASVIIPTIGWRWLIRVASIPGIILIVAFKFIPESARFNVSTGNTRAALATLERVAKMNRSVMPEGKLVEPVLEKRGRFADLLDAKYLRTTLQIWVIWLGISFAYYGVILASAELLERDLVCGSKSDSAVVVTGGDSGESQSPCYCHMFAPSDYRTMIISTIGEIALNPLNILGINFLGRRLSLSITMGCTALFFLLLNICTSSAGLIGFLFMLRALVAANFNTVYIYTAEVYPTTMRALGMGTSGSLCRIGAMVAPFISQVLMSASILGALCLFSSVCVVCAISAFTLPIETKGRALQQIK</sequence>
<reference key="1">
    <citation type="journal article" date="2003" name="Nature">
        <title>The DNA sequence of human chromosome 7.</title>
        <authorList>
            <person name="Hillier L.W."/>
            <person name="Fulton R.S."/>
            <person name="Fulton L.A."/>
            <person name="Graves T.A."/>
            <person name="Pepin K.H."/>
            <person name="Wagner-McPherson C."/>
            <person name="Layman D."/>
            <person name="Maas J."/>
            <person name="Jaeger S."/>
            <person name="Walker R."/>
            <person name="Wylie K."/>
            <person name="Sekhon M."/>
            <person name="Becker M.C."/>
            <person name="O'Laughlin M.D."/>
            <person name="Schaller M.E."/>
            <person name="Fewell G.A."/>
            <person name="Delehaunty K.D."/>
            <person name="Miner T.L."/>
            <person name="Nash W.E."/>
            <person name="Cordes M."/>
            <person name="Du H."/>
            <person name="Sun H."/>
            <person name="Edwards J."/>
            <person name="Bradshaw-Cordum H."/>
            <person name="Ali J."/>
            <person name="Andrews S."/>
            <person name="Isak A."/>
            <person name="Vanbrunt A."/>
            <person name="Nguyen C."/>
            <person name="Du F."/>
            <person name="Lamar B."/>
            <person name="Courtney L."/>
            <person name="Kalicki J."/>
            <person name="Ozersky P."/>
            <person name="Bielicki L."/>
            <person name="Scott K."/>
            <person name="Holmes A."/>
            <person name="Harkins R."/>
            <person name="Harris A."/>
            <person name="Strong C.M."/>
            <person name="Hou S."/>
            <person name="Tomlinson C."/>
            <person name="Dauphin-Kohlberg S."/>
            <person name="Kozlowicz-Reilly A."/>
            <person name="Leonard S."/>
            <person name="Rohlfing T."/>
            <person name="Rock S.M."/>
            <person name="Tin-Wollam A.-M."/>
            <person name="Abbott A."/>
            <person name="Minx P."/>
            <person name="Maupin R."/>
            <person name="Strowmatt C."/>
            <person name="Latreille P."/>
            <person name="Miller N."/>
            <person name="Johnson D."/>
            <person name="Murray J."/>
            <person name="Woessner J.P."/>
            <person name="Wendl M.C."/>
            <person name="Yang S.-P."/>
            <person name="Schultz B.R."/>
            <person name="Wallis J.W."/>
            <person name="Spieth J."/>
            <person name="Bieri T.A."/>
            <person name="Nelson J.O."/>
            <person name="Berkowicz N."/>
            <person name="Wohldmann P.E."/>
            <person name="Cook L.L."/>
            <person name="Hickenbotham M.T."/>
            <person name="Eldred J."/>
            <person name="Williams D."/>
            <person name="Bedell J.A."/>
            <person name="Mardis E.R."/>
            <person name="Clifton S.W."/>
            <person name="Chissoe S.L."/>
            <person name="Marra M.A."/>
            <person name="Raymond C."/>
            <person name="Haugen E."/>
            <person name="Gillett W."/>
            <person name="Zhou Y."/>
            <person name="James R."/>
            <person name="Phelps K."/>
            <person name="Iadanoto S."/>
            <person name="Bubb K."/>
            <person name="Simms E."/>
            <person name="Levy R."/>
            <person name="Clendenning J."/>
            <person name="Kaul R."/>
            <person name="Kent W.J."/>
            <person name="Furey T.S."/>
            <person name="Baertsch R.A."/>
            <person name="Brent M.R."/>
            <person name="Keibler E."/>
            <person name="Flicek P."/>
            <person name="Bork P."/>
            <person name="Suyama M."/>
            <person name="Bailey J.A."/>
            <person name="Portnoy M.E."/>
            <person name="Torrents D."/>
            <person name="Chinwalla A.T."/>
            <person name="Gish W.R."/>
            <person name="Eddy S.R."/>
            <person name="McPherson J.D."/>
            <person name="Olson M.V."/>
            <person name="Eichler E.E."/>
            <person name="Green E.D."/>
            <person name="Waterston R.H."/>
            <person name="Wilson R.K."/>
        </authorList>
    </citation>
    <scope>NUCLEOTIDE SEQUENCE [LARGE SCALE GENOMIC DNA]</scope>
</reference>
<reference key="2">
    <citation type="journal article" date="2004" name="Genome Res.">
        <title>The status, quality, and expansion of the NIH full-length cDNA project: the Mammalian Gene Collection (MGC).</title>
        <authorList>
            <consortium name="The MGC Project Team"/>
        </authorList>
    </citation>
    <scope>NUCLEOTIDE SEQUENCE [LARGE SCALE MRNA] (ISOFORM 2)</scope>
    <source>
        <tissue>Ovary</tissue>
    </source>
</reference>
<reference key="3">
    <citation type="journal article" date="2007" name="Genomics">
        <title>Identification of six putative human transporters with structural similarity to the drug transporter SLC22 family.</title>
        <authorList>
            <person name="Jacobsson J.A."/>
            <person name="Haitina T."/>
            <person name="Lindblom J."/>
            <person name="Fredriksson R."/>
        </authorList>
    </citation>
    <scope>IDENTIFICATION</scope>
</reference>